<sequence length="189" mass="19947">MNPISLLFLALAMSTDAFAAALGKGASLHKPRFIEALRTGLIFGAIETITPVIGWGIGQVAARFAESWDHWIAFTLLLVLGLHMIYNGIKHDDDEEQEKPGQHSFWILAVTAFATSIDALAVGVGLAFVDVNIVIAALAIGLATTVMVTIGVMLGRVLGTMVGKRAEIVGGIVLIIVGATILYEHLSAA</sequence>
<organism>
    <name type="scientific">Pseudomonas savastanoi pv. phaseolicola (strain 1448A / Race 6)</name>
    <name type="common">Pseudomonas syringae pv. phaseolicola (strain 1448A / Race 6)</name>
    <dbReference type="NCBI Taxonomy" id="264730"/>
    <lineage>
        <taxon>Bacteria</taxon>
        <taxon>Pseudomonadati</taxon>
        <taxon>Pseudomonadota</taxon>
        <taxon>Gammaproteobacteria</taxon>
        <taxon>Pseudomonadales</taxon>
        <taxon>Pseudomonadaceae</taxon>
        <taxon>Pseudomonas</taxon>
    </lineage>
</organism>
<protein>
    <recommendedName>
        <fullName evidence="1">Putative manganese efflux pump MntP</fullName>
    </recommendedName>
</protein>
<accession>Q48FX8</accession>
<gene>
    <name evidence="1" type="primary">mntP</name>
    <name type="ordered locus">PSPPH_3559</name>
</gene>
<reference key="1">
    <citation type="journal article" date="2005" name="J. Bacteriol.">
        <title>Whole-genome sequence analysis of Pseudomonas syringae pv. phaseolicola 1448A reveals divergence among pathovars in genes involved in virulence and transposition.</title>
        <authorList>
            <person name="Joardar V."/>
            <person name="Lindeberg M."/>
            <person name="Jackson R.W."/>
            <person name="Selengut J."/>
            <person name="Dodson R."/>
            <person name="Brinkac L.M."/>
            <person name="Daugherty S.C."/>
            <person name="DeBoy R.T."/>
            <person name="Durkin A.S."/>
            <person name="Gwinn Giglio M."/>
            <person name="Madupu R."/>
            <person name="Nelson W.C."/>
            <person name="Rosovitz M.J."/>
            <person name="Sullivan S.A."/>
            <person name="Crabtree J."/>
            <person name="Creasy T."/>
            <person name="Davidsen T.M."/>
            <person name="Haft D.H."/>
            <person name="Zafar N."/>
            <person name="Zhou L."/>
            <person name="Halpin R."/>
            <person name="Holley T."/>
            <person name="Khouri H.M."/>
            <person name="Feldblyum T.V."/>
            <person name="White O."/>
            <person name="Fraser C.M."/>
            <person name="Chatterjee A.K."/>
            <person name="Cartinhour S."/>
            <person name="Schneider D."/>
            <person name="Mansfield J.W."/>
            <person name="Collmer A."/>
            <person name="Buell R."/>
        </authorList>
    </citation>
    <scope>NUCLEOTIDE SEQUENCE [LARGE SCALE GENOMIC DNA]</scope>
    <source>
        <strain>1448A / Race 6</strain>
    </source>
</reference>
<comment type="function">
    <text evidence="1">Probably functions as a manganese efflux pump.</text>
</comment>
<comment type="subcellular location">
    <subcellularLocation>
        <location evidence="1">Cell inner membrane</location>
        <topology evidence="1">Multi-pass membrane protein</topology>
    </subcellularLocation>
</comment>
<comment type="similarity">
    <text evidence="1">Belongs to the MntP (TC 9.B.29) family.</text>
</comment>
<keyword id="KW-0997">Cell inner membrane</keyword>
<keyword id="KW-1003">Cell membrane</keyword>
<keyword id="KW-0406">Ion transport</keyword>
<keyword id="KW-0464">Manganese</keyword>
<keyword id="KW-0472">Membrane</keyword>
<keyword id="KW-0812">Transmembrane</keyword>
<keyword id="KW-1133">Transmembrane helix</keyword>
<keyword id="KW-0813">Transport</keyword>
<evidence type="ECO:0000255" key="1">
    <source>
        <dbReference type="HAMAP-Rule" id="MF_01521"/>
    </source>
</evidence>
<feature type="chain" id="PRO_0000296934" description="Putative manganese efflux pump MntP">
    <location>
        <begin position="1"/>
        <end position="189"/>
    </location>
</feature>
<feature type="transmembrane region" description="Helical" evidence="1">
    <location>
        <begin position="3"/>
        <end position="23"/>
    </location>
</feature>
<feature type="transmembrane region" description="Helical" evidence="1">
    <location>
        <begin position="41"/>
        <end position="61"/>
    </location>
</feature>
<feature type="transmembrane region" description="Helical" evidence="1">
    <location>
        <begin position="69"/>
        <end position="89"/>
    </location>
</feature>
<feature type="transmembrane region" description="Helical" evidence="1">
    <location>
        <begin position="105"/>
        <end position="125"/>
    </location>
</feature>
<feature type="transmembrane region" description="Helical" evidence="1">
    <location>
        <begin position="133"/>
        <end position="153"/>
    </location>
</feature>
<feature type="transmembrane region" description="Helical" evidence="1">
    <location>
        <begin position="168"/>
        <end position="188"/>
    </location>
</feature>
<name>MNTP_PSE14</name>
<dbReference type="EMBL" id="CP000058">
    <property type="protein sequence ID" value="AAZ33330.1"/>
    <property type="molecule type" value="Genomic_DNA"/>
</dbReference>
<dbReference type="RefSeq" id="WP_002554472.1">
    <property type="nucleotide sequence ID" value="NC_005773.3"/>
</dbReference>
<dbReference type="KEGG" id="psp:PSPPH_3559"/>
<dbReference type="eggNOG" id="COG1971">
    <property type="taxonomic scope" value="Bacteria"/>
</dbReference>
<dbReference type="HOGENOM" id="CLU_096410_0_0_6"/>
<dbReference type="Proteomes" id="UP000000551">
    <property type="component" value="Chromosome"/>
</dbReference>
<dbReference type="GO" id="GO:0005886">
    <property type="term" value="C:plasma membrane"/>
    <property type="evidence" value="ECO:0007669"/>
    <property type="project" value="UniProtKB-SubCell"/>
</dbReference>
<dbReference type="GO" id="GO:0005384">
    <property type="term" value="F:manganese ion transmembrane transporter activity"/>
    <property type="evidence" value="ECO:0007669"/>
    <property type="project" value="UniProtKB-UniRule"/>
</dbReference>
<dbReference type="HAMAP" id="MF_01521">
    <property type="entry name" value="MntP_pump"/>
    <property type="match status" value="1"/>
</dbReference>
<dbReference type="InterPro" id="IPR003810">
    <property type="entry name" value="Mntp/YtaF"/>
</dbReference>
<dbReference type="InterPro" id="IPR022929">
    <property type="entry name" value="Put_MntP"/>
</dbReference>
<dbReference type="NCBIfam" id="NF008546">
    <property type="entry name" value="PRK11469.1"/>
    <property type="match status" value="1"/>
</dbReference>
<dbReference type="PANTHER" id="PTHR35529">
    <property type="entry name" value="MANGANESE EFFLUX PUMP MNTP-RELATED"/>
    <property type="match status" value="1"/>
</dbReference>
<dbReference type="PANTHER" id="PTHR35529:SF1">
    <property type="entry name" value="MANGANESE EFFLUX PUMP MNTP-RELATED"/>
    <property type="match status" value="1"/>
</dbReference>
<dbReference type="Pfam" id="PF02659">
    <property type="entry name" value="Mntp"/>
    <property type="match status" value="1"/>
</dbReference>
<proteinExistence type="inferred from homology"/>